<sequence>MSRQSSVSFRSGGSRSFSAASAITPSVSRTSFSSVSRSGGGGGGRISLGGACGAGGYGSRSLYNVGGSKRISYSSGGGSFRNQFGAGGFGFGGGAGSGFGFGGGAGSGFGFGGGAGFGGGYGGAGFPVCPPGGIQEVTVNQNLLTPLNLQIDPTIQRVRTEEREQIKTLNNKFASFIDKVRFLEQQNKVLDTKWALLQEQGTKTIKQNLDPLFEQYINNLRRQLDGVLGERGRLDSELRNMQDLVEDYKNKYEDEINKRTTAENEFVMLKKDVDAAYMNKVELEARVDALMDEINFMKMFFDAELSQMQTHVSDTSVVLSMDNNRSLDLDSIIAEVKAQYEDIANRSRTEAESWYQTKYEELQQTAGRHGDDLRNTKHEISEMNRMIQRLRSEIDNVKKQCANLQNAIAEAEQRGELALKDARNKLTELEEALQKAKQDMARLLREYQELMNTKLALDVEIATYRKLLEGEECRLSGEGVGPVNISVVTNSVSSGYGGGSSIGVGSGFGGGLGSGFAGGLGPRFTRGGGGLGLGSGLSVGGSGFSAGSSQGGMSFGSGGGSGSSVKFVSTTSSSRRSFKS</sequence>
<name>K2C5_MOUSE</name>
<gene>
    <name evidence="1" type="primary">Krt5</name>
    <name evidence="15" type="synonym">Krt2-5</name>
</gene>
<protein>
    <recommendedName>
        <fullName>Keratin, type II cytoskeletal 5</fullName>
    </recommendedName>
    <alternativeName>
        <fullName>Cytokeratin-5</fullName>
        <shortName>CK-5</shortName>
    </alternativeName>
    <alternativeName>
        <fullName>Keratin-5</fullName>
        <shortName>K5</shortName>
    </alternativeName>
    <alternativeName>
        <fullName>Type-II keratin Kb5</fullName>
    </alternativeName>
</protein>
<reference evidence="14 16" key="1">
    <citation type="journal article" date="2001" name="Mol. Biol. Cell">
        <title>Complete cytolysis and neonatal lethality in keratin 5 knockout mice reveal its fundamental role in skin integrity and in epidermolysis bullosa simplex.</title>
        <authorList>
            <person name="Peters B."/>
            <person name="Kirfel J."/>
            <person name="Bussow H."/>
            <person name="Vidal M."/>
            <person name="Magin T.M."/>
        </authorList>
    </citation>
    <scope>NUCLEOTIDE SEQUENCE [GENOMIC DNA]</scope>
    <scope>FUNCTION</scope>
    <scope>TISSUE SPECIFICITY</scope>
    <scope>DISRUPTION PHENOTYPE</scope>
    <source>
        <strain evidence="16">129/Ola</strain>
    </source>
</reference>
<reference evidence="15" key="2">
    <citation type="journal article" date="2004" name="Genome Res.">
        <title>The status, quality, and expansion of the NIH full-length cDNA project: the Mammalian Gene Collection (MGC).</title>
        <authorList>
            <consortium name="The MGC Project Team"/>
        </authorList>
    </citation>
    <scope>NUCLEOTIDE SEQUENCE [LARGE SCALE MRNA]</scope>
    <source>
        <strain evidence="15">Czech II</strain>
        <tissue evidence="15">Mammary gland</tissue>
    </source>
</reference>
<reference key="3">
    <citation type="submission" date="2009-01" db="UniProtKB">
        <authorList>
            <person name="Lubec G."/>
            <person name="Sunyer B."/>
            <person name="Chen W.-Q."/>
        </authorList>
    </citation>
    <scope>PROTEIN SEQUENCE OF 326-337 AND 455-465</scope>
    <scope>IDENTIFICATION BY MASS SPECTROMETRY</scope>
    <source>
        <strain>OF1</strain>
        <tissue>Hippocampus</tissue>
    </source>
</reference>
<reference key="4">
    <citation type="journal article" date="2003" name="J. Biol. Chem.">
        <title>Amelogenin interacts with cytokeratin-5 in ameloblasts during enamel growth.</title>
        <authorList>
            <person name="Ravindranath R.M."/>
            <person name="Basilrose R.M. Sr."/>
            <person name="Ravindranath N.H."/>
            <person name="Vaitheesvaran B."/>
        </authorList>
    </citation>
    <scope>INTERACTION WITH AMELX</scope>
    <scope>SUBCELLULAR LOCATION</scope>
    <scope>DEVELOPMENTAL STAGE</scope>
    <scope>ACETYLATION</scope>
</reference>
<reference key="5">
    <citation type="journal article" date="2008" name="J. Cell Sci.">
        <title>Stress-induced recruitment of epiplakin to keratin networks increases their resistance to hyperphosphorylation-induced disruption.</title>
        <authorList>
            <person name="Spazierer D."/>
            <person name="Raberger J."/>
            <person name="Gross K."/>
            <person name="Fuchs P."/>
            <person name="Wiche G."/>
        </authorList>
    </citation>
    <scope>INTERACTION WITH EPPK1</scope>
</reference>
<reference key="6">
    <citation type="journal article" date="2009" name="Hum. Mutat.">
        <title>Cytokines as genetic modifiers in K5-/- mice and in human epidermolysis bullosa simplex.</title>
        <authorList>
            <person name="Roth W."/>
            <person name="Reuter U."/>
            <person name="Wohlenberg C."/>
            <person name="Bruckner-Tuderman L."/>
            <person name="Magin T.M."/>
        </authorList>
    </citation>
    <scope>FUNCTION</scope>
    <scope>DISRUPTION PHENOTYPE</scope>
</reference>
<reference key="7">
    <citation type="journal article" date="2010" name="Cell">
        <title>A tissue-specific atlas of mouse protein phosphorylation and expression.</title>
        <authorList>
            <person name="Huttlin E.L."/>
            <person name="Jedrychowski M.P."/>
            <person name="Elias J.E."/>
            <person name="Goswami T."/>
            <person name="Rad R."/>
            <person name="Beausoleil S.A."/>
            <person name="Villen J."/>
            <person name="Haas W."/>
            <person name="Sowa M.E."/>
            <person name="Gygi S.P."/>
        </authorList>
    </citation>
    <scope>PHOSPHORYLATION [LARGE SCALE ANALYSIS] AT SER-16; SER-21; SER-26; SER-47 AND SER-61</scope>
    <scope>IDENTIFICATION BY MASS SPECTROMETRY [LARGE SCALE ANALYSIS]</scope>
    <source>
        <tissue>Brain</tissue>
        <tissue>Brown adipose tissue</tissue>
        <tissue>Heart</tissue>
        <tissue>Kidney</tissue>
        <tissue>Liver</tissue>
        <tissue>Lung</tissue>
        <tissue>Pancreas</tissue>
        <tissue>Spleen</tissue>
        <tissue>Testis</tissue>
    </source>
</reference>
<reference key="8">
    <citation type="journal article" date="2014" name="J. Invest. Dermatol.">
        <title>Loss of keratin K2 expression causes aberrant aggregation of K10, hyperkeratosis, and inflammation.</title>
        <authorList>
            <person name="Fischer H."/>
            <person name="Langbein L."/>
            <person name="Reichelt J."/>
            <person name="Praetzel-Wunder S."/>
            <person name="Buchberger M."/>
            <person name="Ghannadan M."/>
            <person name="Tschachler E."/>
            <person name="Eckhart L."/>
        </authorList>
    </citation>
    <scope>TISSUE SPECIFICITY</scope>
</reference>
<reference key="9">
    <citation type="journal article" date="2014" name="J. Invest. Dermatol.">
        <title>Interaction of plectin with keratins 5 and 14: dependence on several plectin domains and keratin quaternary structure.</title>
        <authorList>
            <person name="Bouameur J.E."/>
            <person name="Favre B."/>
            <person name="Fontao L."/>
            <person name="Lingasamy P."/>
            <person name="Begre N."/>
            <person name="Borradori L."/>
        </authorList>
    </citation>
    <scope>IDENTIFICATION IN A COMPLEX WITH KRT14</scope>
    <scope>INTERACTION WITH KRT14 AND PLEC</scope>
</reference>
<reference key="10">
    <citation type="journal article" date="2014" name="Mol. Cell. Proteomics">
        <title>Immunoaffinity enrichment and mass spectrometry analysis of protein methylation.</title>
        <authorList>
            <person name="Guo A."/>
            <person name="Gu H."/>
            <person name="Zhou J."/>
            <person name="Mulhern D."/>
            <person name="Wang Y."/>
            <person name="Lee K.A."/>
            <person name="Yang V."/>
            <person name="Aguiar M."/>
            <person name="Kornhauser J."/>
            <person name="Jia X."/>
            <person name="Ren J."/>
            <person name="Beausoleil S.A."/>
            <person name="Silva J.C."/>
            <person name="Vemulapalli V."/>
            <person name="Bedford M.T."/>
            <person name="Comb M.J."/>
        </authorList>
    </citation>
    <scope>METHYLATION [LARGE SCALE ANALYSIS] AT ARG-526</scope>
    <scope>IDENTIFICATION BY MASS SPECTROMETRY [LARGE SCALE ANALYSIS]</scope>
    <source>
        <tissue>Embryo</tissue>
    </source>
</reference>
<reference key="11">
    <citation type="journal article" date="2016" name="Hum. Mol. Genet.">
        <title>Keratin 12 missense mutation induces the unfolded protein response and apoptosis in Meesmann epithelial corneal dystrophy.</title>
        <authorList>
            <person name="Allen E.H."/>
            <person name="Courtney D.G."/>
            <person name="Atkinson S.D."/>
            <person name="Moore J.E."/>
            <person name="Mairs L."/>
            <person name="Poulsen E.T."/>
            <person name="Schiroli D."/>
            <person name="Maurizi E."/>
            <person name="Cole C."/>
            <person name="Hickerson R.P."/>
            <person name="James J."/>
            <person name="Murgatroyd H."/>
            <person name="Smith F.J."/>
            <person name="MacEwen C."/>
            <person name="Enghild J.J."/>
            <person name="Nesbit M.A."/>
            <person name="Leslie Pedrioli D.M."/>
            <person name="McLean W.H."/>
            <person name="Moore C.B."/>
        </authorList>
    </citation>
    <scope>TISSUE SPECIFICITY</scope>
</reference>
<reference key="12">
    <citation type="journal article" date="2018" name="Biochem. Biophys. Res. Commun.">
        <title>Regulation of keratin 5/14 intermediate filaments by CDK1, Aurora-B, and Rho-kinase.</title>
        <authorList>
            <person name="Inaba H."/>
            <person name="Yamakawa D."/>
            <person name="Tomono Y."/>
            <person name="Enomoto A."/>
            <person name="Mii S."/>
            <person name="Kasahara K."/>
            <person name="Goto H."/>
            <person name="Inagaki M."/>
        </authorList>
    </citation>
    <scope>SUBCELLULAR LOCATION</scope>
    <scope>DEVELOPMENTAL STAGE</scope>
    <scope>PHOSPHORYLATION AT THR-24; THR-145 AND THR-160</scope>
    <scope>MUTAGENESIS OF THR-24; SER-31; THR-145 AND THR-160</scope>
</reference>
<reference key="13">
    <citation type="journal article" date="2020" name="Dev. Biol.">
        <title>Keratin 13 deficiency causes white sponge nevus in mice.</title>
        <authorList>
            <person name="Simonson L."/>
            <person name="Vold S."/>
            <person name="Mowers C."/>
            <person name="Massey R.J."/>
            <person name="Ong I.M."/>
            <person name="Longley B.J."/>
            <person name="Chang H."/>
        </authorList>
    </citation>
    <scope>DEVELOPMENTAL STAGE</scope>
</reference>
<accession>Q922U2</accession>
<accession>Q920F2</accession>
<comment type="function">
    <text evidence="6 9">Required for the formation of keratin intermediate filaments in the basal epidermis and maintenance of the skin barrier in response to mechanical stress (PubMed:11408584). Regulates the recruitment of Langerhans cells to the epidermis, potentially by modulation of the abundance of macrophage chemotactic cytokines, macrophage inflammatory cytokines and CTNND1 localization in keratinocytes (PubMed:19267394).</text>
</comment>
<comment type="subunit">
    <text evidence="1 7 8 11">Heterodimer of a type I and a type II keratin. Heterodimer with type I keratin KRT25 leading to the formation of keratin intermediate filament (KIF) network (By similarity). Forms a heterodimer (via 2B domains) with KRT14 (via 2B domains) (PubMed:24940650). Interacts with PLEC isoform 1C, when in a heterodimer with KRT14 (PubMed:24940650). Interacts with TCHP (By similarity). Interacts with EPPK1 (PubMed:18285451). Interacts with AMELX (PubMed:12657653). Interacts with PKP1 (via N-terminus) and PKP2 (By similarity).</text>
</comment>
<comment type="subcellular location">
    <subcellularLocation>
        <location evidence="7 12">Cytoplasm</location>
    </subcellularLocation>
</comment>
<comment type="tissue specificity">
    <text evidence="6 10">Expressed in the corneal epithelium (at protein level) (PubMed:11408584, PubMed:26758872). Expressed in the epidermis of the ear (at protein level) (PubMed:24751727). Expressed in the basal and spinous layers of the skin at birth (at protein level) (PubMed:11408584).</text>
</comment>
<comment type="developmental stage">
    <text evidence="7 12 13">Expressed in basal layer cells of the stratified squamous epithelia at 15.5 dpc (PubMed:29518391). Expressed in the skin after birth (PubMed:29518391). Expressed in ameloblasts at the cervical and apical mid-regions of mandibular molars at birth, abundance at the apical mid-region significantly increases at P1, and is maintained throughout enamel development until P9 when ameloblasts start losing their integrity (PubMed:12657653). Expressed in ameloblasts at the incisal region of mandibular molars at P3 (PubMed:12657653). Expressed at the Tomes' processes of ameloblasts at the incisal region at P5 (PubMed:12657653). Expression at the incisal region decreased at P7 and P9 (PubMed:12657653). Weakly expressed in the spinous and granular layers of the tongue at P20 (PubMed:32758484).</text>
</comment>
<comment type="PTM">
    <text evidence="12">Phosphorylated by CDK1, AURKB and Rho-kinase, phosphorylation is regulated by the cell cycle (PubMed:29518391). Thr-24 phosphorylation, mediated by CDK1, peaks during prometaphase or metaphase cells with phosphorylated filamentous structures evident throughout the cytoplasm during early mitosis (PubMed:29518391). CDK1 phosphorylates Thr-24 in mitotic cells at the site of injury (PubMed:29518391).</text>
</comment>
<comment type="PTM">
    <text evidence="7">O-glycosylated.</text>
</comment>
<comment type="disruption phenotype">
    <text evidence="6 9">Paws are frequently denuded and epidermis loses contact with the dermis following the mechanical stress of birth, mice die within 1 hour of birth (PubMed:11408584). Tongue cytolysis is evident following birth even before the first milk uptake (PubMed:11408584). Complete loss of keratin filaments in the basal layer, leading to cleavage of the epidermis in the subnuclear cytoplasm just superficial to the hemidesmosomes (PubMed:11408584). Increase in Krt6 expression in the spinous and lower granular layers as well as weakly in basal layer of the blistering roof of cytolyzing cells at birth (PubMed:11408584). Decrease in Krt14 expression in the skin following birth (PubMed:11408584). Increase in Langerhans cells in the epidermis (PubMed:19267394). Decrease in Ctnnd1/p120 localization to the plasma membrane and adherens junctions of basal keratinocytes (PubMed:19267394). Increase in the cytokines Cxcl16, Ccl2, Ccl19 and Ccl20 in the epidermis at birth (PubMed:19267394).</text>
</comment>
<comment type="miscellaneous">
    <text>There are two types of cytoskeletal and microfibrillar keratin: I (acidic; 40-55 kDa) and II (neutral to basic; 56-70 kDa).</text>
</comment>
<comment type="similarity">
    <text evidence="4">Belongs to the intermediate filament family.</text>
</comment>
<evidence type="ECO:0000250" key="1">
    <source>
        <dbReference type="UniProtKB" id="P13647"/>
    </source>
</evidence>
<evidence type="ECO:0000250" key="2">
    <source>
        <dbReference type="UniProtKB" id="Q6P6Q2"/>
    </source>
</evidence>
<evidence type="ECO:0000255" key="3"/>
<evidence type="ECO:0000255" key="4">
    <source>
        <dbReference type="PROSITE-ProRule" id="PRU01188"/>
    </source>
</evidence>
<evidence type="ECO:0000256" key="5">
    <source>
        <dbReference type="SAM" id="MobiDB-lite"/>
    </source>
</evidence>
<evidence type="ECO:0000269" key="6">
    <source>
    </source>
</evidence>
<evidence type="ECO:0000269" key="7">
    <source>
    </source>
</evidence>
<evidence type="ECO:0000269" key="8">
    <source>
    </source>
</evidence>
<evidence type="ECO:0000269" key="9">
    <source>
    </source>
</evidence>
<evidence type="ECO:0000269" key="10">
    <source>
    </source>
</evidence>
<evidence type="ECO:0000269" key="11">
    <source>
    </source>
</evidence>
<evidence type="ECO:0000269" key="12">
    <source>
    </source>
</evidence>
<evidence type="ECO:0000269" key="13">
    <source>
    </source>
</evidence>
<evidence type="ECO:0000305" key="14"/>
<evidence type="ECO:0000312" key="15">
    <source>
        <dbReference type="EMBL" id="AAH06780.1"/>
    </source>
</evidence>
<evidence type="ECO:0000312" key="16">
    <source>
        <dbReference type="EMBL" id="AAL16774.1"/>
    </source>
</evidence>
<evidence type="ECO:0007744" key="17">
    <source>
    </source>
</evidence>
<evidence type="ECO:0007744" key="18">
    <source>
    </source>
</evidence>
<dbReference type="EMBL" id="AF306785">
    <property type="protein sequence ID" value="AAL16774.1"/>
    <property type="molecule type" value="Genomic_DNA"/>
</dbReference>
<dbReference type="EMBL" id="BC006780">
    <property type="protein sequence ID" value="AAH06780.1"/>
    <property type="molecule type" value="mRNA"/>
</dbReference>
<dbReference type="CCDS" id="CCDS27861.1"/>
<dbReference type="RefSeq" id="NP_081287.1">
    <property type="nucleotide sequence ID" value="NM_027011.3"/>
</dbReference>
<dbReference type="SMR" id="Q922U2"/>
<dbReference type="BioGRID" id="225482">
    <property type="interactions" value="21"/>
</dbReference>
<dbReference type="ComplexPortal" id="CPX-5867">
    <property type="entry name" value="Keratin-5 - Keratin-14 dimer complex"/>
</dbReference>
<dbReference type="FunCoup" id="Q922U2">
    <property type="interactions" value="55"/>
</dbReference>
<dbReference type="STRING" id="10090.ENSMUSP00000023709"/>
<dbReference type="GlyGen" id="Q922U2">
    <property type="glycosylation" value="3 sites, 1 O-linked glycan (2 sites)"/>
</dbReference>
<dbReference type="iPTMnet" id="Q922U2"/>
<dbReference type="PhosphoSitePlus" id="Q922U2"/>
<dbReference type="SwissPalm" id="Q922U2"/>
<dbReference type="CPTAC" id="non-CPTAC-3797"/>
<dbReference type="jPOST" id="Q922U2"/>
<dbReference type="PaxDb" id="10090-ENSMUSP00000023709"/>
<dbReference type="ProteomicsDB" id="269168"/>
<dbReference type="DNASU" id="110308"/>
<dbReference type="Ensembl" id="ENSMUST00000023709.7">
    <property type="protein sequence ID" value="ENSMUSP00000023709.6"/>
    <property type="gene ID" value="ENSMUSG00000061527.8"/>
</dbReference>
<dbReference type="GeneID" id="110308"/>
<dbReference type="KEGG" id="mmu:110308"/>
<dbReference type="UCSC" id="uc007xtw.1">
    <property type="organism name" value="mouse"/>
</dbReference>
<dbReference type="AGR" id="MGI:96702"/>
<dbReference type="CTD" id="3852"/>
<dbReference type="MGI" id="MGI:96702">
    <property type="gene designation" value="Krt5"/>
</dbReference>
<dbReference type="VEuPathDB" id="HostDB:ENSMUSG00000061527"/>
<dbReference type="eggNOG" id="ENOG502QURK">
    <property type="taxonomic scope" value="Eukaryota"/>
</dbReference>
<dbReference type="GeneTree" id="ENSGT00940000160458"/>
<dbReference type="HOGENOM" id="CLU_012560_6_1_1"/>
<dbReference type="InParanoid" id="Q922U2"/>
<dbReference type="OMA" id="SWYQTKX"/>
<dbReference type="OrthoDB" id="2441647at2759"/>
<dbReference type="PhylomeDB" id="Q922U2"/>
<dbReference type="TreeFam" id="TF317854"/>
<dbReference type="Reactome" id="R-MMU-446107">
    <property type="pathway name" value="Type I hemidesmosome assembly"/>
</dbReference>
<dbReference type="Reactome" id="R-MMU-6805567">
    <property type="pathway name" value="Keratinization"/>
</dbReference>
<dbReference type="Reactome" id="R-MMU-6809371">
    <property type="pathway name" value="Formation of the cornified envelope"/>
</dbReference>
<dbReference type="BioGRID-ORCS" id="110308">
    <property type="hits" value="3 hits in 81 CRISPR screens"/>
</dbReference>
<dbReference type="ChiTaRS" id="Krt5">
    <property type="organism name" value="mouse"/>
</dbReference>
<dbReference type="PRO" id="PR:Q922U2"/>
<dbReference type="Proteomes" id="UP000000589">
    <property type="component" value="Chromosome 15"/>
</dbReference>
<dbReference type="RNAct" id="Q922U2">
    <property type="molecule type" value="protein"/>
</dbReference>
<dbReference type="Bgee" id="ENSMUSG00000061527">
    <property type="expression patterns" value="Expressed in lip and 136 other cell types or tissues"/>
</dbReference>
<dbReference type="ExpressionAtlas" id="Q922U2">
    <property type="expression patterns" value="baseline and differential"/>
</dbReference>
<dbReference type="GO" id="GO:0001533">
    <property type="term" value="C:cornified envelope"/>
    <property type="evidence" value="ECO:0000314"/>
    <property type="project" value="MGI"/>
</dbReference>
<dbReference type="GO" id="GO:0005737">
    <property type="term" value="C:cytoplasm"/>
    <property type="evidence" value="ECO:0000314"/>
    <property type="project" value="UniProtKB"/>
</dbReference>
<dbReference type="GO" id="GO:0045095">
    <property type="term" value="C:keratin filament"/>
    <property type="evidence" value="ECO:0000314"/>
    <property type="project" value="MGI"/>
</dbReference>
<dbReference type="GO" id="GO:0005739">
    <property type="term" value="C:mitochondrion"/>
    <property type="evidence" value="ECO:0007005"/>
    <property type="project" value="MGI"/>
</dbReference>
<dbReference type="GO" id="GO:0005886">
    <property type="term" value="C:plasma membrane"/>
    <property type="evidence" value="ECO:0000314"/>
    <property type="project" value="MGI"/>
</dbReference>
<dbReference type="GO" id="GO:0045107">
    <property type="term" value="P:intermediate filament polymerization"/>
    <property type="evidence" value="ECO:0000315"/>
    <property type="project" value="UniProtKB"/>
</dbReference>
<dbReference type="GO" id="GO:0030334">
    <property type="term" value="P:regulation of cell migration"/>
    <property type="evidence" value="ECO:0000315"/>
    <property type="project" value="UniProtKB"/>
</dbReference>
<dbReference type="GO" id="GO:0032880">
    <property type="term" value="P:regulation of protein localization"/>
    <property type="evidence" value="ECO:0000315"/>
    <property type="project" value="UniProtKB"/>
</dbReference>
<dbReference type="GO" id="GO:0009612">
    <property type="term" value="P:response to mechanical stimulus"/>
    <property type="evidence" value="ECO:0000315"/>
    <property type="project" value="UniProtKB"/>
</dbReference>
<dbReference type="FunFam" id="1.20.5.1160:FF:000001">
    <property type="entry name" value="Keratin type II"/>
    <property type="match status" value="1"/>
</dbReference>
<dbReference type="FunFam" id="1.20.5.170:FF:000004">
    <property type="entry name" value="Keratin, type II cytoskeletal 5"/>
    <property type="match status" value="1"/>
</dbReference>
<dbReference type="FunFam" id="1.20.5.500:FF:000001">
    <property type="entry name" value="Type II keratin 23"/>
    <property type="match status" value="1"/>
</dbReference>
<dbReference type="Gene3D" id="1.20.5.170">
    <property type="match status" value="1"/>
</dbReference>
<dbReference type="Gene3D" id="1.20.5.500">
    <property type="entry name" value="Single helix bin"/>
    <property type="match status" value="1"/>
</dbReference>
<dbReference type="Gene3D" id="1.20.5.1160">
    <property type="entry name" value="Vasodilator-stimulated phosphoprotein"/>
    <property type="match status" value="1"/>
</dbReference>
<dbReference type="InterPro" id="IPR018039">
    <property type="entry name" value="IF_conserved"/>
</dbReference>
<dbReference type="InterPro" id="IPR039008">
    <property type="entry name" value="IF_rod_dom"/>
</dbReference>
<dbReference type="InterPro" id="IPR032444">
    <property type="entry name" value="Keratin_2_head"/>
</dbReference>
<dbReference type="InterPro" id="IPR003054">
    <property type="entry name" value="Keratin_II"/>
</dbReference>
<dbReference type="PANTHER" id="PTHR45616">
    <property type="entry name" value="GATA-TYPE DOMAIN-CONTAINING PROTEIN"/>
    <property type="match status" value="1"/>
</dbReference>
<dbReference type="PANTHER" id="PTHR45616:SF32">
    <property type="entry name" value="KERATIN, TYPE II CYTOSKELETAL 5"/>
    <property type="match status" value="1"/>
</dbReference>
<dbReference type="Pfam" id="PF00038">
    <property type="entry name" value="Filament"/>
    <property type="match status" value="1"/>
</dbReference>
<dbReference type="Pfam" id="PF16208">
    <property type="entry name" value="Keratin_2_head"/>
    <property type="match status" value="1"/>
</dbReference>
<dbReference type="PRINTS" id="PR01276">
    <property type="entry name" value="TYPE2KERATIN"/>
</dbReference>
<dbReference type="SMART" id="SM01391">
    <property type="entry name" value="Filament"/>
    <property type="match status" value="1"/>
</dbReference>
<dbReference type="SUPFAM" id="SSF64593">
    <property type="entry name" value="Intermediate filament protein, coiled coil region"/>
    <property type="match status" value="3"/>
</dbReference>
<dbReference type="PROSITE" id="PS00226">
    <property type="entry name" value="IF_ROD_1"/>
    <property type="match status" value="1"/>
</dbReference>
<dbReference type="PROSITE" id="PS51842">
    <property type="entry name" value="IF_ROD_2"/>
    <property type="match status" value="1"/>
</dbReference>
<proteinExistence type="evidence at protein level"/>
<feature type="chain" id="PRO_0000063728" description="Keratin, type II cytoskeletal 5">
    <location>
        <begin position="1"/>
        <end position="580"/>
    </location>
</feature>
<feature type="domain" description="IF rod" evidence="4">
    <location>
        <begin position="162"/>
        <end position="475"/>
    </location>
</feature>
<feature type="region of interest" description="Head" evidence="3">
    <location>
        <begin position="1"/>
        <end position="161"/>
    </location>
</feature>
<feature type="region of interest" description="Coil 1A" evidence="3">
    <location>
        <begin position="162"/>
        <end position="197"/>
    </location>
</feature>
<feature type="region of interest" description="Linker 1" evidence="3">
    <location>
        <begin position="198"/>
        <end position="216"/>
    </location>
</feature>
<feature type="region of interest" description="Coil 1B" evidence="3">
    <location>
        <begin position="217"/>
        <end position="309"/>
    </location>
</feature>
<feature type="region of interest" description="Linker 12" evidence="3">
    <location>
        <begin position="310"/>
        <end position="332"/>
    </location>
</feature>
<feature type="region of interest" description="Coil 2" evidence="3">
    <location>
        <begin position="333"/>
        <end position="471"/>
    </location>
</feature>
<feature type="region of interest" description="Tail" evidence="3">
    <location>
        <begin position="472"/>
        <end position="580"/>
    </location>
</feature>
<feature type="region of interest" description="Disordered" evidence="5">
    <location>
        <begin position="555"/>
        <end position="580"/>
    </location>
</feature>
<feature type="compositionally biased region" description="Low complexity" evidence="5">
    <location>
        <begin position="563"/>
        <end position="580"/>
    </location>
</feature>
<feature type="site" description="Stutter" evidence="3">
    <location>
        <position position="413"/>
    </location>
</feature>
<feature type="modified residue" description="Phosphoserine" evidence="2">
    <location>
        <position position="5"/>
    </location>
</feature>
<feature type="modified residue" description="Phosphoserine" evidence="2">
    <location>
        <position position="8"/>
    </location>
</feature>
<feature type="modified residue" description="Phosphoserine" evidence="17">
    <location>
        <position position="16"/>
    </location>
</feature>
<feature type="modified residue" description="Phosphoserine" evidence="17">
    <location>
        <position position="21"/>
    </location>
</feature>
<feature type="modified residue" description="Phosphothreonine; by CDK1" evidence="12">
    <location>
        <position position="24"/>
    </location>
</feature>
<feature type="modified residue" description="Phosphoserine" evidence="17">
    <location>
        <position position="26"/>
    </location>
</feature>
<feature type="modified residue" description="Phosphoserine" evidence="2">
    <location>
        <position position="36"/>
    </location>
</feature>
<feature type="modified residue" description="Phosphoserine" evidence="17">
    <location>
        <position position="47"/>
    </location>
</feature>
<feature type="modified residue" description="Phosphoserine" evidence="17">
    <location>
        <position position="61"/>
    </location>
</feature>
<feature type="modified residue" description="Phosphoserine" evidence="2">
    <location>
        <position position="68"/>
    </location>
</feature>
<feature type="modified residue" description="Phosphoserine" evidence="2">
    <location>
        <position position="72"/>
    </location>
</feature>
<feature type="modified residue" description="Phosphoserine" evidence="2">
    <location>
        <position position="75"/>
    </location>
</feature>
<feature type="modified residue" description="Phosphoserine" evidence="2">
    <location>
        <position position="79"/>
    </location>
</feature>
<feature type="modified residue" description="Phosphothreonine; by CDK1" evidence="12">
    <location>
        <position position="145"/>
    </location>
</feature>
<feature type="modified residue" description="Phosphothreonine; by AURKB" evidence="12">
    <location>
        <position position="160"/>
    </location>
</feature>
<feature type="modified residue" description="Omega-N-methylarginine" evidence="18">
    <location>
        <position position="526"/>
    </location>
</feature>
<feature type="mutagenesis site" description="Decreases phosphorylation by CDK1." evidence="12">
    <original>T</original>
    <variation>A</variation>
    <location>
        <position position="24"/>
    </location>
</feature>
<feature type="mutagenesis site" description="Decreases phosphorylation by AURKB." evidence="12">
    <original>S</original>
    <variation>A</variation>
    <location>
        <position position="31"/>
    </location>
</feature>
<feature type="mutagenesis site" description="Decreases phosphorylation by CDK1." evidence="12">
    <original>T</original>
    <variation>A</variation>
    <location>
        <position position="145"/>
    </location>
</feature>
<feature type="mutagenesis site" description="Decreases phosphorylation by AURKB." evidence="12">
    <original>T</original>
    <variation>A</variation>
    <location>
        <position position="160"/>
    </location>
</feature>
<feature type="sequence conflict" description="In Ref. 1; AAL16774." evidence="14" ref="1">
    <original>V</original>
    <variation>I</variation>
    <location>
        <position position="139"/>
    </location>
</feature>
<organism>
    <name type="scientific">Mus musculus</name>
    <name type="common">Mouse</name>
    <dbReference type="NCBI Taxonomy" id="10090"/>
    <lineage>
        <taxon>Eukaryota</taxon>
        <taxon>Metazoa</taxon>
        <taxon>Chordata</taxon>
        <taxon>Craniata</taxon>
        <taxon>Vertebrata</taxon>
        <taxon>Euteleostomi</taxon>
        <taxon>Mammalia</taxon>
        <taxon>Eutheria</taxon>
        <taxon>Euarchontoglires</taxon>
        <taxon>Glires</taxon>
        <taxon>Rodentia</taxon>
        <taxon>Myomorpha</taxon>
        <taxon>Muroidea</taxon>
        <taxon>Muridae</taxon>
        <taxon>Murinae</taxon>
        <taxon>Mus</taxon>
        <taxon>Mus</taxon>
    </lineage>
</organism>
<keyword id="KW-0175">Coiled coil</keyword>
<keyword id="KW-0963">Cytoplasm</keyword>
<keyword id="KW-0903">Direct protein sequencing</keyword>
<keyword id="KW-0403">Intermediate filament</keyword>
<keyword id="KW-0416">Keratin</keyword>
<keyword id="KW-0488">Methylation</keyword>
<keyword id="KW-0597">Phosphoprotein</keyword>
<keyword id="KW-1185">Reference proteome</keyword>